<feature type="chain" id="PRO_0000348838" description="tRNA-cytidine(32) 2-sulfurtransferase">
    <location>
        <begin position="1"/>
        <end position="317"/>
    </location>
</feature>
<feature type="short sequence motif" description="PP-loop motif" evidence="1">
    <location>
        <begin position="46"/>
        <end position="51"/>
    </location>
</feature>
<feature type="binding site" evidence="1">
    <location>
        <position position="121"/>
    </location>
    <ligand>
        <name>[4Fe-4S] cluster</name>
        <dbReference type="ChEBI" id="CHEBI:49883"/>
    </ligand>
</feature>
<feature type="binding site" evidence="1">
    <location>
        <position position="124"/>
    </location>
    <ligand>
        <name>[4Fe-4S] cluster</name>
        <dbReference type="ChEBI" id="CHEBI:49883"/>
    </ligand>
</feature>
<feature type="binding site" evidence="1">
    <location>
        <position position="212"/>
    </location>
    <ligand>
        <name>[4Fe-4S] cluster</name>
        <dbReference type="ChEBI" id="CHEBI:49883"/>
    </ligand>
</feature>
<reference key="1">
    <citation type="submission" date="2007-03" db="EMBL/GenBank/DDBJ databases">
        <title>Complete sequence of Shewanella loihica PV-4.</title>
        <authorList>
            <consortium name="US DOE Joint Genome Institute"/>
            <person name="Copeland A."/>
            <person name="Lucas S."/>
            <person name="Lapidus A."/>
            <person name="Barry K."/>
            <person name="Detter J.C."/>
            <person name="Glavina del Rio T."/>
            <person name="Hammon N."/>
            <person name="Israni S."/>
            <person name="Dalin E."/>
            <person name="Tice H."/>
            <person name="Pitluck S."/>
            <person name="Chain P."/>
            <person name="Malfatti S."/>
            <person name="Shin M."/>
            <person name="Vergez L."/>
            <person name="Schmutz J."/>
            <person name="Larimer F."/>
            <person name="Land M."/>
            <person name="Hauser L."/>
            <person name="Kyrpides N."/>
            <person name="Mikhailova N."/>
            <person name="Romine M.F."/>
            <person name="Serres G."/>
            <person name="Fredrickson J."/>
            <person name="Tiedje J."/>
            <person name="Richardson P."/>
        </authorList>
    </citation>
    <scope>NUCLEOTIDE SEQUENCE [LARGE SCALE GENOMIC DNA]</scope>
    <source>
        <strain>ATCC BAA-1088 / PV-4</strain>
    </source>
</reference>
<keyword id="KW-0004">4Fe-4S</keyword>
<keyword id="KW-0067">ATP-binding</keyword>
<keyword id="KW-0963">Cytoplasm</keyword>
<keyword id="KW-0408">Iron</keyword>
<keyword id="KW-0411">Iron-sulfur</keyword>
<keyword id="KW-0460">Magnesium</keyword>
<keyword id="KW-0479">Metal-binding</keyword>
<keyword id="KW-0547">Nucleotide-binding</keyword>
<keyword id="KW-1185">Reference proteome</keyword>
<keyword id="KW-0694">RNA-binding</keyword>
<keyword id="KW-0808">Transferase</keyword>
<keyword id="KW-0819">tRNA processing</keyword>
<keyword id="KW-0820">tRNA-binding</keyword>
<accession>A3QEG3</accession>
<sequence length="317" mass="35404">MSEETLSKKQITRLNKLQKRLRREVGSAIADYNMIEEGDTVMCCLSGGKDSYAMLDILVNLLQRAPVNFNLVAVNLDQKQPGFPEDILPAYLDSLKVPYHILEKDTYSIVKDKIPEGKTTCSLCSRLRRGTLYGFAQKIGATKIALGHHRDDIIETMFLNMFYAGKLKAMPPKLLSDDGANVVIRPLAYSREKDIAEYAELKAFPIIPCNLCGSQENLKRAAVKEMLKSWDKQFPGRIETIFTAMQNTSPSQGVDRDQFDFVSLKQDPDAPMKGDVAESDLPAFDFLDLANSGHIDLDAAKRSSDLLKIDVVSTYTP</sequence>
<protein>
    <recommendedName>
        <fullName evidence="1">tRNA-cytidine(32) 2-sulfurtransferase</fullName>
        <ecNumber evidence="1">2.8.1.-</ecNumber>
    </recommendedName>
    <alternativeName>
        <fullName evidence="1">Two-thiocytidine biosynthesis protein A</fullName>
    </alternativeName>
    <alternativeName>
        <fullName evidence="1">tRNA 2-thiocytidine biosynthesis protein TtcA</fullName>
    </alternativeName>
</protein>
<comment type="function">
    <text evidence="1">Catalyzes the ATP-dependent 2-thiolation of cytidine in position 32 of tRNA, to form 2-thiocytidine (s(2)C32). The sulfur atoms are provided by the cysteine/cysteine desulfurase (IscS) system.</text>
</comment>
<comment type="catalytic activity">
    <reaction evidence="1">
        <text>cytidine(32) in tRNA + S-sulfanyl-L-cysteinyl-[cysteine desulfurase] + AH2 + ATP = 2-thiocytidine(32) in tRNA + L-cysteinyl-[cysteine desulfurase] + A + AMP + diphosphate + H(+)</text>
        <dbReference type="Rhea" id="RHEA:57048"/>
        <dbReference type="Rhea" id="RHEA-COMP:10288"/>
        <dbReference type="Rhea" id="RHEA-COMP:12157"/>
        <dbReference type="Rhea" id="RHEA-COMP:12158"/>
        <dbReference type="Rhea" id="RHEA-COMP:14821"/>
        <dbReference type="ChEBI" id="CHEBI:13193"/>
        <dbReference type="ChEBI" id="CHEBI:15378"/>
        <dbReference type="ChEBI" id="CHEBI:17499"/>
        <dbReference type="ChEBI" id="CHEBI:29950"/>
        <dbReference type="ChEBI" id="CHEBI:30616"/>
        <dbReference type="ChEBI" id="CHEBI:33019"/>
        <dbReference type="ChEBI" id="CHEBI:61963"/>
        <dbReference type="ChEBI" id="CHEBI:82748"/>
        <dbReference type="ChEBI" id="CHEBI:141453"/>
        <dbReference type="ChEBI" id="CHEBI:456215"/>
    </reaction>
    <physiologicalReaction direction="left-to-right" evidence="1">
        <dbReference type="Rhea" id="RHEA:57049"/>
    </physiologicalReaction>
</comment>
<comment type="cofactor">
    <cofactor evidence="1">
        <name>Mg(2+)</name>
        <dbReference type="ChEBI" id="CHEBI:18420"/>
    </cofactor>
</comment>
<comment type="cofactor">
    <cofactor evidence="1">
        <name>[4Fe-4S] cluster</name>
        <dbReference type="ChEBI" id="CHEBI:49883"/>
    </cofactor>
    <text evidence="1">Binds 1 [4Fe-4S] cluster per subunit. The cluster is chelated by three Cys residues, the fourth Fe has a free coordination site that may bind a sulfur atom transferred from the persulfide of IscS.</text>
</comment>
<comment type="pathway">
    <text evidence="1">tRNA modification.</text>
</comment>
<comment type="subunit">
    <text evidence="1">Homodimer.</text>
</comment>
<comment type="subcellular location">
    <subcellularLocation>
        <location evidence="1">Cytoplasm</location>
    </subcellularLocation>
</comment>
<comment type="miscellaneous">
    <text evidence="1">The thiolation reaction likely consists of two steps: a first activation step by ATP to form an adenylated intermediate of the target base of tRNA, and a second nucleophilic substitution step of the sulfur (S) atom supplied by the hydrosulfide attached to the Fe-S cluster.</text>
</comment>
<comment type="similarity">
    <text evidence="1">Belongs to the TtcA family.</text>
</comment>
<dbReference type="EC" id="2.8.1.-" evidence="1"/>
<dbReference type="EMBL" id="CP000606">
    <property type="protein sequence ID" value="ABO23861.1"/>
    <property type="molecule type" value="Genomic_DNA"/>
</dbReference>
<dbReference type="RefSeq" id="WP_011865793.1">
    <property type="nucleotide sequence ID" value="NC_009092.1"/>
</dbReference>
<dbReference type="SMR" id="A3QEG3"/>
<dbReference type="STRING" id="323850.Shew_1995"/>
<dbReference type="KEGG" id="slo:Shew_1995"/>
<dbReference type="eggNOG" id="COG0037">
    <property type="taxonomic scope" value="Bacteria"/>
</dbReference>
<dbReference type="HOGENOM" id="CLU_026481_0_0_6"/>
<dbReference type="OrthoDB" id="9801054at2"/>
<dbReference type="Proteomes" id="UP000001558">
    <property type="component" value="Chromosome"/>
</dbReference>
<dbReference type="GO" id="GO:0005737">
    <property type="term" value="C:cytoplasm"/>
    <property type="evidence" value="ECO:0007669"/>
    <property type="project" value="UniProtKB-SubCell"/>
</dbReference>
<dbReference type="GO" id="GO:0051539">
    <property type="term" value="F:4 iron, 4 sulfur cluster binding"/>
    <property type="evidence" value="ECO:0007669"/>
    <property type="project" value="UniProtKB-UniRule"/>
</dbReference>
<dbReference type="GO" id="GO:0005524">
    <property type="term" value="F:ATP binding"/>
    <property type="evidence" value="ECO:0007669"/>
    <property type="project" value="UniProtKB-UniRule"/>
</dbReference>
<dbReference type="GO" id="GO:0000287">
    <property type="term" value="F:magnesium ion binding"/>
    <property type="evidence" value="ECO:0007669"/>
    <property type="project" value="UniProtKB-UniRule"/>
</dbReference>
<dbReference type="GO" id="GO:0016783">
    <property type="term" value="F:sulfurtransferase activity"/>
    <property type="evidence" value="ECO:0007669"/>
    <property type="project" value="UniProtKB-UniRule"/>
</dbReference>
<dbReference type="GO" id="GO:0000049">
    <property type="term" value="F:tRNA binding"/>
    <property type="evidence" value="ECO:0007669"/>
    <property type="project" value="UniProtKB-KW"/>
</dbReference>
<dbReference type="GO" id="GO:0034227">
    <property type="term" value="P:tRNA thio-modification"/>
    <property type="evidence" value="ECO:0007669"/>
    <property type="project" value="UniProtKB-UniRule"/>
</dbReference>
<dbReference type="CDD" id="cd24138">
    <property type="entry name" value="TtcA-like"/>
    <property type="match status" value="1"/>
</dbReference>
<dbReference type="Gene3D" id="3.40.50.620">
    <property type="entry name" value="HUPs"/>
    <property type="match status" value="1"/>
</dbReference>
<dbReference type="HAMAP" id="MF_01850">
    <property type="entry name" value="TtcA"/>
    <property type="match status" value="1"/>
</dbReference>
<dbReference type="InterPro" id="IPR014729">
    <property type="entry name" value="Rossmann-like_a/b/a_fold"/>
</dbReference>
<dbReference type="InterPro" id="IPR011063">
    <property type="entry name" value="TilS/TtcA_N"/>
</dbReference>
<dbReference type="InterPro" id="IPR012089">
    <property type="entry name" value="tRNA_Cyd_32_2_STrfase"/>
</dbReference>
<dbReference type="NCBIfam" id="NF007972">
    <property type="entry name" value="PRK10696.1"/>
    <property type="match status" value="1"/>
</dbReference>
<dbReference type="PANTHER" id="PTHR43686:SF1">
    <property type="entry name" value="AMINOTRAN_5 DOMAIN-CONTAINING PROTEIN"/>
    <property type="match status" value="1"/>
</dbReference>
<dbReference type="PANTHER" id="PTHR43686">
    <property type="entry name" value="SULFURTRANSFERASE-RELATED"/>
    <property type="match status" value="1"/>
</dbReference>
<dbReference type="Pfam" id="PF01171">
    <property type="entry name" value="ATP_bind_3"/>
    <property type="match status" value="1"/>
</dbReference>
<dbReference type="SUPFAM" id="SSF52402">
    <property type="entry name" value="Adenine nucleotide alpha hydrolases-like"/>
    <property type="match status" value="1"/>
</dbReference>
<proteinExistence type="inferred from homology"/>
<organism>
    <name type="scientific">Shewanella loihica (strain ATCC BAA-1088 / PV-4)</name>
    <dbReference type="NCBI Taxonomy" id="323850"/>
    <lineage>
        <taxon>Bacteria</taxon>
        <taxon>Pseudomonadati</taxon>
        <taxon>Pseudomonadota</taxon>
        <taxon>Gammaproteobacteria</taxon>
        <taxon>Alteromonadales</taxon>
        <taxon>Shewanellaceae</taxon>
        <taxon>Shewanella</taxon>
    </lineage>
</organism>
<gene>
    <name evidence="1" type="primary">ttcA</name>
    <name type="ordered locus">Shew_1995</name>
</gene>
<evidence type="ECO:0000255" key="1">
    <source>
        <dbReference type="HAMAP-Rule" id="MF_01850"/>
    </source>
</evidence>
<name>TTCA_SHELP</name>